<comment type="function">
    <text evidence="1">Pole-localizer protein involved in the regulation of several cellular processes.</text>
</comment>
<comment type="subcellular location">
    <subcellularLocation>
        <location evidence="1">Cytoplasm</location>
    </subcellularLocation>
    <text evidence="1">Forms clusters that localize mainly near one pole of the cell.</text>
</comment>
<comment type="similarity">
    <text evidence="1">Belongs to the pole-localizer TmaR family.</text>
</comment>
<dbReference type="EMBL" id="CP001063">
    <property type="protein sequence ID" value="ACD09493.1"/>
    <property type="molecule type" value="Genomic_DNA"/>
</dbReference>
<dbReference type="RefSeq" id="WP_000450409.1">
    <property type="nucleotide sequence ID" value="NC_010658.1"/>
</dbReference>
<dbReference type="SMR" id="B2TYH5"/>
<dbReference type="STRING" id="344609.SbBS512_E1230"/>
<dbReference type="KEGG" id="sbc:SbBS512_E1230"/>
<dbReference type="HOGENOM" id="CLU_153146_0_0_6"/>
<dbReference type="Proteomes" id="UP000001030">
    <property type="component" value="Chromosome"/>
</dbReference>
<dbReference type="GO" id="GO:0005829">
    <property type="term" value="C:cytosol"/>
    <property type="evidence" value="ECO:0007669"/>
    <property type="project" value="TreeGrafter"/>
</dbReference>
<dbReference type="HAMAP" id="MF_00683">
    <property type="entry name" value="Pole_loc_TmaR"/>
    <property type="match status" value="1"/>
</dbReference>
<dbReference type="InterPro" id="IPR007458">
    <property type="entry name" value="DUF496"/>
</dbReference>
<dbReference type="InterPro" id="IPR053375">
    <property type="entry name" value="UPF0265"/>
</dbReference>
<dbReference type="NCBIfam" id="NF003844">
    <property type="entry name" value="PRK05423.1"/>
    <property type="match status" value="1"/>
</dbReference>
<dbReference type="NCBIfam" id="NF040881">
    <property type="entry name" value="PTS_reg_TmaR"/>
    <property type="match status" value="1"/>
</dbReference>
<dbReference type="PANTHER" id="PTHR39591">
    <property type="entry name" value="UPF0265 PROTEIN YEEX"/>
    <property type="match status" value="1"/>
</dbReference>
<dbReference type="PANTHER" id="PTHR39591:SF1">
    <property type="entry name" value="UPF0265 PROTEIN YEEX"/>
    <property type="match status" value="1"/>
</dbReference>
<dbReference type="Pfam" id="PF04363">
    <property type="entry name" value="DUF496"/>
    <property type="match status" value="1"/>
</dbReference>
<dbReference type="PIRSF" id="PIRSF028773">
    <property type="entry name" value="UCP028773"/>
    <property type="match status" value="1"/>
</dbReference>
<reference key="1">
    <citation type="submission" date="2008-05" db="EMBL/GenBank/DDBJ databases">
        <title>Complete sequence of Shigella boydii serotype 18 strain BS512.</title>
        <authorList>
            <person name="Rasko D.A."/>
            <person name="Rosovitz M."/>
            <person name="Maurelli A.T."/>
            <person name="Myers G."/>
            <person name="Seshadri R."/>
            <person name="Cer R."/>
            <person name="Jiang L."/>
            <person name="Ravel J."/>
            <person name="Sebastian Y."/>
        </authorList>
    </citation>
    <scope>NUCLEOTIDE SEQUENCE [LARGE SCALE GENOMIC DNA]</scope>
    <source>
        <strain>CDC 3083-94 / BS512</strain>
    </source>
</reference>
<protein>
    <recommendedName>
        <fullName evidence="1">Pole-localizer protein TmaR</fullName>
    </recommendedName>
</protein>
<keyword id="KW-0175">Coiled coil</keyword>
<keyword id="KW-0963">Cytoplasm</keyword>
<keyword id="KW-1185">Reference proteome</keyword>
<name>TMAR_SHIB3</name>
<gene>
    <name evidence="1" type="primary">tmaR</name>
    <name type="ordered locus">SbBS512_E1230</name>
</gene>
<sequence length="109" mass="12778">METTKPSFQDVLEFVRLFRRKNKLQREIQDVEKKIRDNQKRVLLLDNLSDYIKPGMSVEAIQGIIASMKGDYEDRVDDYIIKNAELSKERRDISKKLKAMGEMKNGEAK</sequence>
<proteinExistence type="inferred from homology"/>
<organism>
    <name type="scientific">Shigella boydii serotype 18 (strain CDC 3083-94 / BS512)</name>
    <dbReference type="NCBI Taxonomy" id="344609"/>
    <lineage>
        <taxon>Bacteria</taxon>
        <taxon>Pseudomonadati</taxon>
        <taxon>Pseudomonadota</taxon>
        <taxon>Gammaproteobacteria</taxon>
        <taxon>Enterobacterales</taxon>
        <taxon>Enterobacteriaceae</taxon>
        <taxon>Shigella</taxon>
    </lineage>
</organism>
<evidence type="ECO:0000255" key="1">
    <source>
        <dbReference type="HAMAP-Rule" id="MF_00683"/>
    </source>
</evidence>
<feature type="chain" id="PRO_1000131779" description="Pole-localizer protein TmaR">
    <location>
        <begin position="1"/>
        <end position="109"/>
    </location>
</feature>
<feature type="coiled-coil region" evidence="1">
    <location>
        <begin position="14"/>
        <end position="41"/>
    </location>
</feature>
<accession>B2TYH5</accession>